<dbReference type="EC" id="7.1.2.2" evidence="1"/>
<dbReference type="EMBL" id="BA000039">
    <property type="protein sequence ID" value="BAC07987.1"/>
    <property type="molecule type" value="Genomic_DNA"/>
</dbReference>
<dbReference type="RefSeq" id="NP_681225.1">
    <property type="nucleotide sequence ID" value="NC_004113.1"/>
</dbReference>
<dbReference type="RefSeq" id="WP_011056290.1">
    <property type="nucleotide sequence ID" value="NC_004113.1"/>
</dbReference>
<dbReference type="SMR" id="Q8DLP3"/>
<dbReference type="STRING" id="197221.gene:10747024"/>
<dbReference type="EnsemblBacteria" id="BAC07987">
    <property type="protein sequence ID" value="BAC07987"/>
    <property type="gene ID" value="BAC07987"/>
</dbReference>
<dbReference type="KEGG" id="tel:tlr0435"/>
<dbReference type="PATRIC" id="fig|197221.4.peg.459"/>
<dbReference type="eggNOG" id="COG0056">
    <property type="taxonomic scope" value="Bacteria"/>
</dbReference>
<dbReference type="Proteomes" id="UP000000440">
    <property type="component" value="Chromosome"/>
</dbReference>
<dbReference type="GO" id="GO:0031676">
    <property type="term" value="C:plasma membrane-derived thylakoid membrane"/>
    <property type="evidence" value="ECO:0007669"/>
    <property type="project" value="UniProtKB-SubCell"/>
</dbReference>
<dbReference type="GO" id="GO:0045259">
    <property type="term" value="C:proton-transporting ATP synthase complex"/>
    <property type="evidence" value="ECO:0007669"/>
    <property type="project" value="UniProtKB-KW"/>
</dbReference>
<dbReference type="GO" id="GO:0043531">
    <property type="term" value="F:ADP binding"/>
    <property type="evidence" value="ECO:0007669"/>
    <property type="project" value="TreeGrafter"/>
</dbReference>
<dbReference type="GO" id="GO:0005524">
    <property type="term" value="F:ATP binding"/>
    <property type="evidence" value="ECO:0007669"/>
    <property type="project" value="UniProtKB-UniRule"/>
</dbReference>
<dbReference type="GO" id="GO:0046933">
    <property type="term" value="F:proton-transporting ATP synthase activity, rotational mechanism"/>
    <property type="evidence" value="ECO:0007669"/>
    <property type="project" value="UniProtKB-UniRule"/>
</dbReference>
<dbReference type="CDD" id="cd18113">
    <property type="entry name" value="ATP-synt_F1_alpha_C"/>
    <property type="match status" value="1"/>
</dbReference>
<dbReference type="CDD" id="cd18116">
    <property type="entry name" value="ATP-synt_F1_alpha_N"/>
    <property type="match status" value="1"/>
</dbReference>
<dbReference type="CDD" id="cd01132">
    <property type="entry name" value="F1-ATPase_alpha_CD"/>
    <property type="match status" value="1"/>
</dbReference>
<dbReference type="FunFam" id="1.20.150.20:FF:000001">
    <property type="entry name" value="ATP synthase subunit alpha"/>
    <property type="match status" value="1"/>
</dbReference>
<dbReference type="FunFam" id="2.40.30.20:FF:000001">
    <property type="entry name" value="ATP synthase subunit alpha"/>
    <property type="match status" value="1"/>
</dbReference>
<dbReference type="FunFam" id="3.40.50.300:FF:000002">
    <property type="entry name" value="ATP synthase subunit alpha"/>
    <property type="match status" value="1"/>
</dbReference>
<dbReference type="Gene3D" id="2.40.30.20">
    <property type="match status" value="1"/>
</dbReference>
<dbReference type="Gene3D" id="1.20.150.20">
    <property type="entry name" value="ATP synthase alpha/beta chain, C-terminal domain"/>
    <property type="match status" value="1"/>
</dbReference>
<dbReference type="Gene3D" id="3.40.50.300">
    <property type="entry name" value="P-loop containing nucleotide triphosphate hydrolases"/>
    <property type="match status" value="1"/>
</dbReference>
<dbReference type="HAMAP" id="MF_01346">
    <property type="entry name" value="ATP_synth_alpha_bact"/>
    <property type="match status" value="1"/>
</dbReference>
<dbReference type="InterPro" id="IPR023366">
    <property type="entry name" value="ATP_synth_asu-like_sf"/>
</dbReference>
<dbReference type="InterPro" id="IPR000793">
    <property type="entry name" value="ATP_synth_asu_C"/>
</dbReference>
<dbReference type="InterPro" id="IPR038376">
    <property type="entry name" value="ATP_synth_asu_C_sf"/>
</dbReference>
<dbReference type="InterPro" id="IPR033732">
    <property type="entry name" value="ATP_synth_F1_a_nt-bd_dom"/>
</dbReference>
<dbReference type="InterPro" id="IPR005294">
    <property type="entry name" value="ATP_synth_F1_asu"/>
</dbReference>
<dbReference type="InterPro" id="IPR020003">
    <property type="entry name" value="ATPase_a/bsu_AS"/>
</dbReference>
<dbReference type="InterPro" id="IPR004100">
    <property type="entry name" value="ATPase_F1/V1/A1_a/bsu_N"/>
</dbReference>
<dbReference type="InterPro" id="IPR036121">
    <property type="entry name" value="ATPase_F1/V1/A1_a/bsu_N_sf"/>
</dbReference>
<dbReference type="InterPro" id="IPR000194">
    <property type="entry name" value="ATPase_F1/V1/A1_a/bsu_nucl-bd"/>
</dbReference>
<dbReference type="InterPro" id="IPR027417">
    <property type="entry name" value="P-loop_NTPase"/>
</dbReference>
<dbReference type="NCBIfam" id="TIGR00962">
    <property type="entry name" value="atpA"/>
    <property type="match status" value="1"/>
</dbReference>
<dbReference type="NCBIfam" id="NF009884">
    <property type="entry name" value="PRK13343.1"/>
    <property type="match status" value="1"/>
</dbReference>
<dbReference type="PANTHER" id="PTHR48082">
    <property type="entry name" value="ATP SYNTHASE SUBUNIT ALPHA, MITOCHONDRIAL"/>
    <property type="match status" value="1"/>
</dbReference>
<dbReference type="PANTHER" id="PTHR48082:SF2">
    <property type="entry name" value="ATP SYNTHASE SUBUNIT ALPHA, MITOCHONDRIAL"/>
    <property type="match status" value="1"/>
</dbReference>
<dbReference type="Pfam" id="PF00006">
    <property type="entry name" value="ATP-synt_ab"/>
    <property type="match status" value="1"/>
</dbReference>
<dbReference type="Pfam" id="PF00306">
    <property type="entry name" value="ATP-synt_ab_C"/>
    <property type="match status" value="1"/>
</dbReference>
<dbReference type="Pfam" id="PF02874">
    <property type="entry name" value="ATP-synt_ab_N"/>
    <property type="match status" value="1"/>
</dbReference>
<dbReference type="PIRSF" id="PIRSF039088">
    <property type="entry name" value="F_ATPase_subunit_alpha"/>
    <property type="match status" value="1"/>
</dbReference>
<dbReference type="SUPFAM" id="SSF47917">
    <property type="entry name" value="C-terminal domain of alpha and beta subunits of F1 ATP synthase"/>
    <property type="match status" value="1"/>
</dbReference>
<dbReference type="SUPFAM" id="SSF50615">
    <property type="entry name" value="N-terminal domain of alpha and beta subunits of F1 ATP synthase"/>
    <property type="match status" value="1"/>
</dbReference>
<dbReference type="SUPFAM" id="SSF52540">
    <property type="entry name" value="P-loop containing nucleoside triphosphate hydrolases"/>
    <property type="match status" value="1"/>
</dbReference>
<dbReference type="PROSITE" id="PS00152">
    <property type="entry name" value="ATPASE_ALPHA_BETA"/>
    <property type="match status" value="1"/>
</dbReference>
<feature type="chain" id="PRO_0000238376" description="ATP synthase subunit alpha">
    <location>
        <begin position="1"/>
        <end position="503"/>
    </location>
</feature>
<feature type="binding site" evidence="1">
    <location>
        <begin position="170"/>
        <end position="177"/>
    </location>
    <ligand>
        <name>ATP</name>
        <dbReference type="ChEBI" id="CHEBI:30616"/>
    </ligand>
</feature>
<feature type="site" description="Required for activity" evidence="1">
    <location>
        <position position="363"/>
    </location>
</feature>
<organism>
    <name type="scientific">Thermosynechococcus vestitus (strain NIES-2133 / IAM M-273 / BP-1)</name>
    <dbReference type="NCBI Taxonomy" id="197221"/>
    <lineage>
        <taxon>Bacteria</taxon>
        <taxon>Bacillati</taxon>
        <taxon>Cyanobacteriota</taxon>
        <taxon>Cyanophyceae</taxon>
        <taxon>Acaryochloridales</taxon>
        <taxon>Thermosynechococcaceae</taxon>
        <taxon>Thermosynechococcus</taxon>
    </lineage>
</organism>
<proteinExistence type="evidence at protein level"/>
<comment type="function">
    <text evidence="1">Produces ATP from ADP in the presence of a proton gradient across the membrane. The alpha chain is a regulatory subunit.</text>
</comment>
<comment type="function">
    <text evidence="2">The complex from the organism is particularly stable to disruption and remains functional after 6 hrs at 55 degrees Celsius.</text>
</comment>
<comment type="catalytic activity">
    <reaction evidence="1">
        <text>ATP + H2O + 4 H(+)(in) = ADP + phosphate + 5 H(+)(out)</text>
        <dbReference type="Rhea" id="RHEA:57720"/>
        <dbReference type="ChEBI" id="CHEBI:15377"/>
        <dbReference type="ChEBI" id="CHEBI:15378"/>
        <dbReference type="ChEBI" id="CHEBI:30616"/>
        <dbReference type="ChEBI" id="CHEBI:43474"/>
        <dbReference type="ChEBI" id="CHEBI:456216"/>
        <dbReference type="EC" id="7.1.2.2"/>
    </reaction>
</comment>
<comment type="activity regulation">
    <text>Inhibited by dicyclohexylcarbodiimide.</text>
</comment>
<comment type="biophysicochemical properties">
    <temperatureDependence>
        <text>Optimum temperature is 55 degrees Celsius, activity was detected from 4 to 95 degrees Celsius.</text>
    </temperatureDependence>
</comment>
<comment type="subunit">
    <text evidence="2">F-type ATPases have 2 components, CF(1) - the catalytic core - and CF(0) - the membrane proton channel. CF(1) has five subunits: alpha(3), beta(3), gamma(1), delta(1), epsilon(1). CF(0) has four main subunits: a(1), b(1), b'(1) and c(9-12).</text>
</comment>
<comment type="subcellular location">
    <subcellularLocation>
        <location evidence="1 2">Cellular thylakoid membrane</location>
        <topology evidence="1">Peripheral membrane protein</topology>
    </subcellularLocation>
</comment>
<comment type="mass spectrometry" mass="54271.0" method="MALDI" evidence="2"/>
<comment type="similarity">
    <text evidence="1">Belongs to the ATPase alpha/beta chains family.</text>
</comment>
<reference key="1">
    <citation type="journal article" date="2002" name="DNA Res.">
        <title>Complete genome structure of the thermophilic cyanobacterium Thermosynechococcus elongatus BP-1.</title>
        <authorList>
            <person name="Nakamura Y."/>
            <person name="Kaneko T."/>
            <person name="Sato S."/>
            <person name="Ikeuchi M."/>
            <person name="Katoh H."/>
            <person name="Sasamoto S."/>
            <person name="Watanabe A."/>
            <person name="Iriguchi M."/>
            <person name="Kawashima K."/>
            <person name="Kimura T."/>
            <person name="Kishida Y."/>
            <person name="Kiyokawa C."/>
            <person name="Kohara M."/>
            <person name="Matsumoto M."/>
            <person name="Matsuno A."/>
            <person name="Nakazaki N."/>
            <person name="Shimpo S."/>
            <person name="Sugimoto M."/>
            <person name="Takeuchi C."/>
            <person name="Yamada M."/>
            <person name="Tabata S."/>
        </authorList>
    </citation>
    <scope>NUCLEOTIDE SEQUENCE [LARGE SCALE GENOMIC DNA]</scope>
    <source>
        <strain>NIES-2133 / IAM M-273 / BP-1</strain>
    </source>
</reference>
<reference key="2">
    <citation type="journal article" date="2008" name="Biochim. Biophys. Acta">
        <title>Remarkable stability of the proton translocating F1FO-ATP synthase from the thermophilic cyanobacterium Thermosynechococcus elongatus BP-1.</title>
        <authorList>
            <person name="Suhai T."/>
            <person name="Dencher N.A."/>
            <person name="Poetsch A."/>
            <person name="Seelert H."/>
        </authorList>
    </citation>
    <scope>FUNCTION</scope>
    <scope>MASS SPECTROMETRY</scope>
    <scope>SUBUNIT</scope>
    <scope>SUBCELLULAR LOCATION</scope>
    <source>
        <strain>NIES-2133 / IAM M-273 / BP-1</strain>
    </source>
</reference>
<evidence type="ECO:0000255" key="1">
    <source>
        <dbReference type="HAMAP-Rule" id="MF_01346"/>
    </source>
</evidence>
<evidence type="ECO:0000269" key="2">
    <source>
    </source>
</evidence>
<protein>
    <recommendedName>
        <fullName evidence="1">ATP synthase subunit alpha</fullName>
        <ecNumber evidence="1">7.1.2.2</ecNumber>
    </recommendedName>
    <alternativeName>
        <fullName evidence="1">ATP synthase F1 sector subunit alpha</fullName>
    </alternativeName>
    <alternativeName>
        <fullName evidence="1">F-ATPase subunit alpha</fullName>
    </alternativeName>
</protein>
<name>ATPA_THEVB</name>
<sequence length="503" mass="54305">MVSIRPDEISSIIRQQIEQYEQSIKVDNVGTVLQVGDGIARVYGLDKVMASELVEFEDGTVGIALNLEEDNVGVVLMGDGLSIEEGSTVRATGKIASIPVGEAAIGRVVDALMRPIDGKGEIHTTQSRLIESPAPGIVQRKSVCEPLQTGITAIDAMIPIGRGQRELIIGDRQTGKTAVAIDTILNQKGQDVICVYVAIGQKASSVAQVVNVLRERGALDYTIVIAANASDPAALQYLAPYTGATVAEYFMYQGKHTLVVYDDLSKQAQAYRQMSLLLRRPPGREAYPGDVFYLHSRLLERAAKLNDALGGGSMTALPVVETQAGDVSAYIPTNVISITDGQIFLSSDLFNAGLRPAINAGISVSRVGSAAQIKAMKQVAGKLKLELAQFDELQAFAQFASDLDKATQNQLARGQRLREILKQPQYSPIPVEYQVATIYAGTNGYLDDIPVEAVAKFVAGLRDYLRTNKPEYGEIIRTTQKLDEKAEALLKEAIAEYKATFTA</sequence>
<keyword id="KW-0066">ATP synthesis</keyword>
<keyword id="KW-0067">ATP-binding</keyword>
<keyword id="KW-0139">CF(1)</keyword>
<keyword id="KW-0375">Hydrogen ion transport</keyword>
<keyword id="KW-0406">Ion transport</keyword>
<keyword id="KW-0472">Membrane</keyword>
<keyword id="KW-0547">Nucleotide-binding</keyword>
<keyword id="KW-1185">Reference proteome</keyword>
<keyword id="KW-0793">Thylakoid</keyword>
<keyword id="KW-1278">Translocase</keyword>
<keyword id="KW-0813">Transport</keyword>
<accession>Q8DLP3</accession>
<gene>
    <name evidence="1" type="primary">atpA</name>
    <name type="ordered locus">tlr0435</name>
</gene>